<name>TPIS_FRAP2</name>
<reference key="1">
    <citation type="submission" date="2007-12" db="EMBL/GenBank/DDBJ databases">
        <title>Complete sequence of chromosome of Francisella philomiragia subsp. philomiragia ATCC 25017.</title>
        <authorList>
            <consortium name="US DOE Joint Genome Institute"/>
            <person name="Copeland A."/>
            <person name="Lucas S."/>
            <person name="Lapidus A."/>
            <person name="Barry K."/>
            <person name="Detter J.C."/>
            <person name="Glavina del Rio T."/>
            <person name="Hammon N."/>
            <person name="Israni S."/>
            <person name="Dalin E."/>
            <person name="Tice H."/>
            <person name="Pitluck S."/>
            <person name="Chain P."/>
            <person name="Malfatti S."/>
            <person name="Shin M."/>
            <person name="Vergez L."/>
            <person name="Schmutz J."/>
            <person name="Larimer F."/>
            <person name="Land M."/>
            <person name="Hauser L."/>
            <person name="Richardson P."/>
        </authorList>
    </citation>
    <scope>NUCLEOTIDE SEQUENCE [LARGE SCALE GENOMIC DNA]</scope>
    <source>
        <strain>ATCC 25017 / CCUG 19701 / FSC 153 / O#319-036</strain>
    </source>
</reference>
<proteinExistence type="inferred from homology"/>
<accession>B0TWU2</accession>
<keyword id="KW-0963">Cytoplasm</keyword>
<keyword id="KW-0312">Gluconeogenesis</keyword>
<keyword id="KW-0324">Glycolysis</keyword>
<keyword id="KW-0413">Isomerase</keyword>
<sequence>MQKLIMGNWKMNGSSASIKELCKGISEVNYNSEKVAVAVFPSSVYVKEVLAQLPKEIGVGLQNITFYDNGAYTGELSAEMLHDVGCNYLLIGHSERRSLFGETDQDVFKKLNKIIDTSVVPVVCIGESLEDRQGGRLEKVLTTQLSLILENLSIEQLARVIIAYEPVWAIGTGVVASLEQVQETHQFIRSLVAKVDENLAKNMKIVYGGSLKAENAKDILSLPDVDGGLIGGASLKASEFNEIINQANKICTE</sequence>
<dbReference type="EC" id="5.3.1.1" evidence="1"/>
<dbReference type="EMBL" id="CP000937">
    <property type="protein sequence ID" value="ABZ87200.1"/>
    <property type="molecule type" value="Genomic_DNA"/>
</dbReference>
<dbReference type="SMR" id="B0TWU2"/>
<dbReference type="KEGG" id="fph:Fphi_0977"/>
<dbReference type="eggNOG" id="COG0149">
    <property type="taxonomic scope" value="Bacteria"/>
</dbReference>
<dbReference type="HOGENOM" id="CLU_024251_2_3_6"/>
<dbReference type="UniPathway" id="UPA00109">
    <property type="reaction ID" value="UER00189"/>
</dbReference>
<dbReference type="UniPathway" id="UPA00138"/>
<dbReference type="GO" id="GO:0005829">
    <property type="term" value="C:cytosol"/>
    <property type="evidence" value="ECO:0007669"/>
    <property type="project" value="TreeGrafter"/>
</dbReference>
<dbReference type="GO" id="GO:0004807">
    <property type="term" value="F:triose-phosphate isomerase activity"/>
    <property type="evidence" value="ECO:0007669"/>
    <property type="project" value="UniProtKB-UniRule"/>
</dbReference>
<dbReference type="GO" id="GO:0006094">
    <property type="term" value="P:gluconeogenesis"/>
    <property type="evidence" value="ECO:0007669"/>
    <property type="project" value="UniProtKB-UniRule"/>
</dbReference>
<dbReference type="GO" id="GO:0046166">
    <property type="term" value="P:glyceraldehyde-3-phosphate biosynthetic process"/>
    <property type="evidence" value="ECO:0007669"/>
    <property type="project" value="TreeGrafter"/>
</dbReference>
<dbReference type="GO" id="GO:0019563">
    <property type="term" value="P:glycerol catabolic process"/>
    <property type="evidence" value="ECO:0007669"/>
    <property type="project" value="TreeGrafter"/>
</dbReference>
<dbReference type="GO" id="GO:0006096">
    <property type="term" value="P:glycolytic process"/>
    <property type="evidence" value="ECO:0007669"/>
    <property type="project" value="UniProtKB-UniRule"/>
</dbReference>
<dbReference type="CDD" id="cd00311">
    <property type="entry name" value="TIM"/>
    <property type="match status" value="1"/>
</dbReference>
<dbReference type="FunFam" id="3.20.20.70:FF:000016">
    <property type="entry name" value="Triosephosphate isomerase"/>
    <property type="match status" value="1"/>
</dbReference>
<dbReference type="Gene3D" id="3.20.20.70">
    <property type="entry name" value="Aldolase class I"/>
    <property type="match status" value="1"/>
</dbReference>
<dbReference type="HAMAP" id="MF_00147_B">
    <property type="entry name" value="TIM_B"/>
    <property type="match status" value="1"/>
</dbReference>
<dbReference type="InterPro" id="IPR013785">
    <property type="entry name" value="Aldolase_TIM"/>
</dbReference>
<dbReference type="InterPro" id="IPR035990">
    <property type="entry name" value="TIM_sf"/>
</dbReference>
<dbReference type="InterPro" id="IPR022896">
    <property type="entry name" value="TrioseP_Isoase_bac/euk"/>
</dbReference>
<dbReference type="InterPro" id="IPR000652">
    <property type="entry name" value="Triosephosphate_isomerase"/>
</dbReference>
<dbReference type="InterPro" id="IPR020861">
    <property type="entry name" value="Triosephosphate_isomerase_AS"/>
</dbReference>
<dbReference type="NCBIfam" id="TIGR00419">
    <property type="entry name" value="tim"/>
    <property type="match status" value="1"/>
</dbReference>
<dbReference type="PANTHER" id="PTHR21139">
    <property type="entry name" value="TRIOSEPHOSPHATE ISOMERASE"/>
    <property type="match status" value="1"/>
</dbReference>
<dbReference type="PANTHER" id="PTHR21139:SF42">
    <property type="entry name" value="TRIOSEPHOSPHATE ISOMERASE"/>
    <property type="match status" value="1"/>
</dbReference>
<dbReference type="Pfam" id="PF00121">
    <property type="entry name" value="TIM"/>
    <property type="match status" value="1"/>
</dbReference>
<dbReference type="SUPFAM" id="SSF51351">
    <property type="entry name" value="Triosephosphate isomerase (TIM)"/>
    <property type="match status" value="1"/>
</dbReference>
<dbReference type="PROSITE" id="PS00171">
    <property type="entry name" value="TIM_1"/>
    <property type="match status" value="1"/>
</dbReference>
<dbReference type="PROSITE" id="PS51440">
    <property type="entry name" value="TIM_2"/>
    <property type="match status" value="1"/>
</dbReference>
<feature type="chain" id="PRO_1000076646" description="Triosephosphate isomerase">
    <location>
        <begin position="1"/>
        <end position="253"/>
    </location>
</feature>
<feature type="active site" description="Electrophile" evidence="1">
    <location>
        <position position="93"/>
    </location>
</feature>
<feature type="active site" description="Proton acceptor" evidence="1">
    <location>
        <position position="165"/>
    </location>
</feature>
<feature type="binding site" evidence="1">
    <location>
        <begin position="8"/>
        <end position="10"/>
    </location>
    <ligand>
        <name>substrate</name>
    </ligand>
</feature>
<feature type="binding site" evidence="1">
    <location>
        <position position="171"/>
    </location>
    <ligand>
        <name>substrate</name>
    </ligand>
</feature>
<feature type="binding site" evidence="1">
    <location>
        <position position="210"/>
    </location>
    <ligand>
        <name>substrate</name>
    </ligand>
</feature>
<feature type="binding site" evidence="1">
    <location>
        <begin position="231"/>
        <end position="232"/>
    </location>
    <ligand>
        <name>substrate</name>
    </ligand>
</feature>
<protein>
    <recommendedName>
        <fullName evidence="1">Triosephosphate isomerase</fullName>
        <shortName evidence="1">TIM</shortName>
        <shortName evidence="1">TPI</shortName>
        <ecNumber evidence="1">5.3.1.1</ecNumber>
    </recommendedName>
    <alternativeName>
        <fullName evidence="1">Triose-phosphate isomerase</fullName>
    </alternativeName>
</protein>
<comment type="function">
    <text evidence="1">Involved in the gluconeogenesis. Catalyzes stereospecifically the conversion of dihydroxyacetone phosphate (DHAP) to D-glyceraldehyde-3-phosphate (G3P).</text>
</comment>
<comment type="catalytic activity">
    <reaction evidence="1">
        <text>D-glyceraldehyde 3-phosphate = dihydroxyacetone phosphate</text>
        <dbReference type="Rhea" id="RHEA:18585"/>
        <dbReference type="ChEBI" id="CHEBI:57642"/>
        <dbReference type="ChEBI" id="CHEBI:59776"/>
        <dbReference type="EC" id="5.3.1.1"/>
    </reaction>
</comment>
<comment type="pathway">
    <text evidence="1">Carbohydrate biosynthesis; gluconeogenesis.</text>
</comment>
<comment type="pathway">
    <text evidence="1">Carbohydrate degradation; glycolysis; D-glyceraldehyde 3-phosphate from glycerone phosphate: step 1/1.</text>
</comment>
<comment type="subunit">
    <text evidence="1">Homodimer.</text>
</comment>
<comment type="subcellular location">
    <subcellularLocation>
        <location evidence="1">Cytoplasm</location>
    </subcellularLocation>
</comment>
<comment type="similarity">
    <text evidence="1">Belongs to the triosephosphate isomerase family.</text>
</comment>
<organism>
    <name type="scientific">Francisella philomiragia subsp. philomiragia (strain ATCC 25017 / CCUG 19701 / FSC 153 / O#319-036)</name>
    <dbReference type="NCBI Taxonomy" id="484022"/>
    <lineage>
        <taxon>Bacteria</taxon>
        <taxon>Pseudomonadati</taxon>
        <taxon>Pseudomonadota</taxon>
        <taxon>Gammaproteobacteria</taxon>
        <taxon>Thiotrichales</taxon>
        <taxon>Francisellaceae</taxon>
        <taxon>Francisella</taxon>
    </lineage>
</organism>
<evidence type="ECO:0000255" key="1">
    <source>
        <dbReference type="HAMAP-Rule" id="MF_00147"/>
    </source>
</evidence>
<gene>
    <name evidence="1" type="primary">tpiA</name>
    <name type="ordered locus">Fphi_0977</name>
</gene>